<keyword id="KW-0933">Apicoplast</keyword>
<keyword id="KW-0251">Elongation factor</keyword>
<keyword id="KW-0342">GTP-binding</keyword>
<keyword id="KW-0378">Hydrolase</keyword>
<keyword id="KW-0460">Magnesium</keyword>
<keyword id="KW-0479">Metal-binding</keyword>
<keyword id="KW-0547">Nucleotide-binding</keyword>
<keyword id="KW-0934">Plastid</keyword>
<keyword id="KW-0648">Protein biosynthesis</keyword>
<feature type="chain" id="PRO_0000337597" description="Elongation factor Tu, apicoplast">
    <location>
        <begin position="1"/>
        <end position="401"/>
    </location>
</feature>
<feature type="domain" description="tr-type G">
    <location>
        <begin position="10"/>
        <end position="206"/>
    </location>
</feature>
<feature type="region of interest" description="G1" evidence="1">
    <location>
        <begin position="19"/>
        <end position="26"/>
    </location>
</feature>
<feature type="region of interest" description="G2" evidence="1">
    <location>
        <begin position="60"/>
        <end position="64"/>
    </location>
</feature>
<feature type="region of interest" description="G3" evidence="1">
    <location>
        <begin position="81"/>
        <end position="84"/>
    </location>
</feature>
<feature type="region of interest" description="G4" evidence="1">
    <location>
        <begin position="136"/>
        <end position="139"/>
    </location>
</feature>
<feature type="region of interest" description="G5" evidence="1">
    <location>
        <begin position="173"/>
        <end position="175"/>
    </location>
</feature>
<feature type="binding site" evidence="1">
    <location>
        <begin position="19"/>
        <end position="26"/>
    </location>
    <ligand>
        <name>GTP</name>
        <dbReference type="ChEBI" id="CHEBI:37565"/>
    </ligand>
</feature>
<feature type="binding site" evidence="2">
    <location>
        <position position="26"/>
    </location>
    <ligand>
        <name>Mg(2+)</name>
        <dbReference type="ChEBI" id="CHEBI:18420"/>
    </ligand>
</feature>
<feature type="binding site" evidence="1">
    <location>
        <begin position="81"/>
        <end position="85"/>
    </location>
    <ligand>
        <name>GTP</name>
        <dbReference type="ChEBI" id="CHEBI:37565"/>
    </ligand>
</feature>
<feature type="binding site" evidence="1">
    <location>
        <begin position="136"/>
        <end position="139"/>
    </location>
    <ligand>
        <name>GTP</name>
        <dbReference type="ChEBI" id="CHEBI:37565"/>
    </ligand>
</feature>
<feature type="sequence conflict" description="In Ref. 2; CAA72239/CAA61254." evidence="3" ref="2">
    <original>M</original>
    <variation>I</variation>
    <location>
        <position position="376"/>
    </location>
</feature>
<organism>
    <name type="scientific">Toxoplasma gondii</name>
    <dbReference type="NCBI Taxonomy" id="5811"/>
    <lineage>
        <taxon>Eukaryota</taxon>
        <taxon>Sar</taxon>
        <taxon>Alveolata</taxon>
        <taxon>Apicomplexa</taxon>
        <taxon>Conoidasida</taxon>
        <taxon>Coccidia</taxon>
        <taxon>Eucoccidiorida</taxon>
        <taxon>Eimeriorina</taxon>
        <taxon>Sarcocystidae</taxon>
        <taxon>Toxoplasma</taxon>
    </lineage>
</organism>
<gene>
    <name type="primary">tufA</name>
</gene>
<proteinExistence type="inferred from homology"/>
<sequence>MAKEIFKKQKPHINIGTIGHVDHGKTTLTAAITYVLAKNNQAKLKTYKEIDCAPEEIARGITIKTSHIEYETAVRHYAHIDCPGHADYIKNMITGAAQMDGAILVVSAVDGPMPQTKEHLLLAKQIGISNIIVFLNKIDLIDDNEILELVELETRELLDKYNFSSDTPIITGSALKALDNNLTSNIWVDKIYELLTALDSYIPLPKRDLDKPFLLAIEDIFSITGRGTVVTGKIERGSIKLGDTVTMLGFNISKNVVVIGLEMFQKTLEIGEAGDNVGILLRGIQKTEVKRGMILSKPLTMTLHSIFQADVYILTVAEGGREKPIFEGYCPQFYLYTINITGSIKFSSETKETGTKMILPGDRVKLNVTLIYSIAMEKGMRFAIREGGRTIGAGIITDIIK</sequence>
<protein>
    <recommendedName>
        <fullName>Elongation factor Tu, apicoplast</fullName>
        <shortName>EF-Tu</shortName>
        <ecNumber evidence="2">3.6.5.3</ecNumber>
    </recommendedName>
</protein>
<reference key="1">
    <citation type="submission" date="1995-06" db="EMBL/GenBank/DDBJ databases">
        <title>An elongation factor encoded by the toxoplasma gondii putative plastid.</title>
        <authorList>
            <person name="Denny P.W."/>
            <person name="Wilson R.J.M."/>
        </authorList>
    </citation>
    <scope>NUCLEOTIDE SEQUENCE [GENOMIC DNA]</scope>
    <source>
        <strain>RH</strain>
    </source>
</reference>
<reference key="2">
    <citation type="submission" date="1999-06" db="EMBL/GenBank/DDBJ databases">
        <title>Mapping, cloning, and complete sequence annotation of the 35-kb plastid genome of Toxoplasma gondii.</title>
        <authorList>
            <person name="Kissinger J.C."/>
            <person name="Donald R.G."/>
            <person name="Moulton A.L."/>
            <person name="Gutell R."/>
            <person name="Aiello D.P."/>
            <person name="Lang-Unnasch N."/>
            <person name="Roos D.S."/>
        </authorList>
    </citation>
    <scope>NUCLEOTIDE SEQUENCE [GENOMIC DNA]</scope>
    <source>
        <strain>RH</strain>
    </source>
</reference>
<geneLocation type="apicoplast"/>
<evidence type="ECO:0000250" key="1"/>
<evidence type="ECO:0000255" key="2">
    <source>
        <dbReference type="HAMAP-Rule" id="MF_00118"/>
    </source>
</evidence>
<evidence type="ECO:0000305" key="3"/>
<dbReference type="EC" id="3.6.5.3" evidence="2"/>
<dbReference type="EMBL" id="X88775">
    <property type="protein sequence ID" value="CAA61254.1"/>
    <property type="molecule type" value="Genomic_DNA"/>
</dbReference>
<dbReference type="EMBL" id="Y11431">
    <property type="protein sequence ID" value="CAA72239.1"/>
    <property type="molecule type" value="Genomic_DNA"/>
</dbReference>
<dbReference type="EMBL" id="U87145">
    <property type="protein sequence ID" value="AAD41145.1"/>
    <property type="molecule type" value="Genomic_DNA"/>
</dbReference>
<dbReference type="RefSeq" id="NP_044559.1">
    <property type="nucleotide sequence ID" value="NC_001799.1"/>
</dbReference>
<dbReference type="SMR" id="Q9TMM9"/>
<dbReference type="GeneID" id="1466608"/>
<dbReference type="VEuPathDB" id="ToxoDB:TGARI_262380"/>
<dbReference type="VEuPathDB" id="ToxoDB:TGCAST_216960"/>
<dbReference type="VEuPathDB" id="ToxoDB:TGCAST_302050"/>
<dbReference type="VEuPathDB" id="ToxoDB:TGCAST_390980"/>
<dbReference type="VEuPathDB" id="ToxoDB:TGCOUG_302050"/>
<dbReference type="VEuPathDB" id="ToxoDB:TGDOM2_262380"/>
<dbReference type="VEuPathDB" id="ToxoDB:TGFOU_302050"/>
<dbReference type="VEuPathDB" id="ToxoDB:TGGT1_262380"/>
<dbReference type="VEuPathDB" id="ToxoDB:TGMAS_302050"/>
<dbReference type="VEuPathDB" id="ToxoDB:TGME49_302050"/>
<dbReference type="VEuPathDB" id="ToxoDB:TGP89_302050"/>
<dbReference type="VEuPathDB" id="ToxoDB:TGPRC2_302060"/>
<dbReference type="VEuPathDB" id="ToxoDB:TGRH88_086420"/>
<dbReference type="VEuPathDB" id="ToxoDB:TGRUB_302050"/>
<dbReference type="VEuPathDB" id="ToxoDB:TGVAND_262380"/>
<dbReference type="VEuPathDB" id="ToxoDB:TGVEG_262380"/>
<dbReference type="GO" id="GO:0020011">
    <property type="term" value="C:apicoplast"/>
    <property type="evidence" value="ECO:0007669"/>
    <property type="project" value="UniProtKB-SubCell"/>
</dbReference>
<dbReference type="GO" id="GO:0005525">
    <property type="term" value="F:GTP binding"/>
    <property type="evidence" value="ECO:0007669"/>
    <property type="project" value="UniProtKB-KW"/>
</dbReference>
<dbReference type="GO" id="GO:0003924">
    <property type="term" value="F:GTPase activity"/>
    <property type="evidence" value="ECO:0007669"/>
    <property type="project" value="InterPro"/>
</dbReference>
<dbReference type="GO" id="GO:0003746">
    <property type="term" value="F:translation elongation factor activity"/>
    <property type="evidence" value="ECO:0007669"/>
    <property type="project" value="UniProtKB-KW"/>
</dbReference>
<dbReference type="CDD" id="cd01884">
    <property type="entry name" value="EF_Tu"/>
    <property type="match status" value="1"/>
</dbReference>
<dbReference type="CDD" id="cd03697">
    <property type="entry name" value="EFTU_II"/>
    <property type="match status" value="1"/>
</dbReference>
<dbReference type="CDD" id="cd03707">
    <property type="entry name" value="EFTU_III"/>
    <property type="match status" value="1"/>
</dbReference>
<dbReference type="FunFam" id="2.40.30.10:FF:000001">
    <property type="entry name" value="Elongation factor Tu"/>
    <property type="match status" value="1"/>
</dbReference>
<dbReference type="FunFam" id="3.40.50.300:FF:000003">
    <property type="entry name" value="Elongation factor Tu"/>
    <property type="match status" value="1"/>
</dbReference>
<dbReference type="Gene3D" id="3.40.50.300">
    <property type="entry name" value="P-loop containing nucleotide triphosphate hydrolases"/>
    <property type="match status" value="1"/>
</dbReference>
<dbReference type="Gene3D" id="2.40.30.10">
    <property type="entry name" value="Translation factors"/>
    <property type="match status" value="2"/>
</dbReference>
<dbReference type="HAMAP" id="MF_00118_B">
    <property type="entry name" value="EF_Tu_B"/>
    <property type="match status" value="1"/>
</dbReference>
<dbReference type="InterPro" id="IPR041709">
    <property type="entry name" value="EF-Tu_GTP-bd"/>
</dbReference>
<dbReference type="InterPro" id="IPR050055">
    <property type="entry name" value="EF-Tu_GTPase"/>
</dbReference>
<dbReference type="InterPro" id="IPR004161">
    <property type="entry name" value="EFTu-like_2"/>
</dbReference>
<dbReference type="InterPro" id="IPR033720">
    <property type="entry name" value="EFTU_2"/>
</dbReference>
<dbReference type="InterPro" id="IPR027417">
    <property type="entry name" value="P-loop_NTPase"/>
</dbReference>
<dbReference type="InterPro" id="IPR005225">
    <property type="entry name" value="Small_GTP-bd"/>
</dbReference>
<dbReference type="InterPro" id="IPR000795">
    <property type="entry name" value="T_Tr_GTP-bd_dom"/>
</dbReference>
<dbReference type="InterPro" id="IPR009000">
    <property type="entry name" value="Transl_B-barrel_sf"/>
</dbReference>
<dbReference type="InterPro" id="IPR009001">
    <property type="entry name" value="Transl_elong_EF1A/Init_IF2_C"/>
</dbReference>
<dbReference type="InterPro" id="IPR004541">
    <property type="entry name" value="Transl_elong_EFTu/EF1A_bac/org"/>
</dbReference>
<dbReference type="InterPro" id="IPR004160">
    <property type="entry name" value="Transl_elong_EFTu/EF1A_C"/>
</dbReference>
<dbReference type="NCBIfam" id="TIGR00485">
    <property type="entry name" value="EF-Tu"/>
    <property type="match status" value="1"/>
</dbReference>
<dbReference type="NCBIfam" id="NF000766">
    <property type="entry name" value="PRK00049.1"/>
    <property type="match status" value="1"/>
</dbReference>
<dbReference type="NCBIfam" id="NF009372">
    <property type="entry name" value="PRK12735.1"/>
    <property type="match status" value="1"/>
</dbReference>
<dbReference type="NCBIfam" id="NF009373">
    <property type="entry name" value="PRK12736.1"/>
    <property type="match status" value="1"/>
</dbReference>
<dbReference type="NCBIfam" id="TIGR00231">
    <property type="entry name" value="small_GTP"/>
    <property type="match status" value="1"/>
</dbReference>
<dbReference type="PANTHER" id="PTHR43721:SF22">
    <property type="entry name" value="ELONGATION FACTOR TU, MITOCHONDRIAL"/>
    <property type="match status" value="1"/>
</dbReference>
<dbReference type="PANTHER" id="PTHR43721">
    <property type="entry name" value="ELONGATION FACTOR TU-RELATED"/>
    <property type="match status" value="1"/>
</dbReference>
<dbReference type="Pfam" id="PF00009">
    <property type="entry name" value="GTP_EFTU"/>
    <property type="match status" value="1"/>
</dbReference>
<dbReference type="Pfam" id="PF03144">
    <property type="entry name" value="GTP_EFTU_D2"/>
    <property type="match status" value="1"/>
</dbReference>
<dbReference type="Pfam" id="PF03143">
    <property type="entry name" value="GTP_EFTU_D3"/>
    <property type="match status" value="1"/>
</dbReference>
<dbReference type="PRINTS" id="PR00315">
    <property type="entry name" value="ELONGATNFCT"/>
</dbReference>
<dbReference type="SUPFAM" id="SSF50465">
    <property type="entry name" value="EF-Tu/eEF-1alpha/eIF2-gamma C-terminal domain"/>
    <property type="match status" value="1"/>
</dbReference>
<dbReference type="SUPFAM" id="SSF52540">
    <property type="entry name" value="P-loop containing nucleoside triphosphate hydrolases"/>
    <property type="match status" value="1"/>
</dbReference>
<dbReference type="SUPFAM" id="SSF50447">
    <property type="entry name" value="Translation proteins"/>
    <property type="match status" value="1"/>
</dbReference>
<dbReference type="PROSITE" id="PS51722">
    <property type="entry name" value="G_TR_2"/>
    <property type="match status" value="1"/>
</dbReference>
<accession>Q9TMM9</accession>
<accession>O78325</accession>
<accession>Q26114</accession>
<comment type="function">
    <text evidence="2">GTP hydrolase that promotes the GTP-dependent binding of aminoacyl-tRNA to the A-site of ribosomes during protein biosynthesis.</text>
</comment>
<comment type="catalytic activity">
    <reaction evidence="2">
        <text>GTP + H2O = GDP + phosphate + H(+)</text>
        <dbReference type="Rhea" id="RHEA:19669"/>
        <dbReference type="ChEBI" id="CHEBI:15377"/>
        <dbReference type="ChEBI" id="CHEBI:15378"/>
        <dbReference type="ChEBI" id="CHEBI:37565"/>
        <dbReference type="ChEBI" id="CHEBI:43474"/>
        <dbReference type="ChEBI" id="CHEBI:58189"/>
        <dbReference type="EC" id="3.6.5.3"/>
    </reaction>
    <physiologicalReaction direction="left-to-right" evidence="2">
        <dbReference type="Rhea" id="RHEA:19670"/>
    </physiologicalReaction>
</comment>
<comment type="subunit">
    <text evidence="1">Monomer.</text>
</comment>
<comment type="subcellular location">
    <subcellularLocation>
        <location>Plastid</location>
        <location>Apicoplast</location>
    </subcellularLocation>
</comment>
<comment type="similarity">
    <text evidence="3">Belongs to the TRAFAC class translation factor GTPase superfamily. Classic translation factor GTPase family. EF-Tu/EF-1A subfamily.</text>
</comment>
<name>EFTU_TOXGO</name>